<sequence>MASSSNWLSGVNVVLVMAYGSLVFVLLFIFVKRQIMRFAMKSRRGPHVPVGHNAPKDLKEEIDIRLSRVQDIKYEPQLLADDDTRLLQLETQGNQSCYNYLYRMKALDAIRASEIPFHAEGRHPCSLMGKNFRSYLLDLRNTSTPFKGVGKALIDTLLDGYETARYGTGVFGQSEYLRYQEALSELATVVKARIGSSQRQHQSAAKDLTQSPEMSPTTIQVTYLPSSQKSKRPKHFLELKSFKDNYNTLESTL</sequence>
<protein>
    <recommendedName>
        <fullName>Protein C1orf43 homolog</fullName>
    </recommendedName>
</protein>
<evidence type="ECO:0000250" key="1">
    <source>
        <dbReference type="UniProtKB" id="Q9BWL3"/>
    </source>
</evidence>
<evidence type="ECO:0000255" key="2"/>
<evidence type="ECO:0000269" key="3">
    <source>
    </source>
</evidence>
<evidence type="ECO:0000303" key="4">
    <source>
    </source>
</evidence>
<evidence type="ECO:0000305" key="5"/>
<proteinExistence type="evidence at transcript level"/>
<reference key="1">
    <citation type="submission" date="2004-01" db="EMBL/GenBank/DDBJ databases">
        <title>Identification of murine homologous gene to human NS5ATP4.</title>
        <authorList>
            <person name="Cheng J."/>
            <person name="Yang Q."/>
            <person name="Liu Y."/>
        </authorList>
    </citation>
    <scope>NUCLEOTIDE SEQUENCE [MRNA] (ISOFORM 1)</scope>
</reference>
<reference key="2">
    <citation type="journal article" date="2005" name="Science">
        <title>The transcriptional landscape of the mammalian genome.</title>
        <authorList>
            <person name="Carninci P."/>
            <person name="Kasukawa T."/>
            <person name="Katayama S."/>
            <person name="Gough J."/>
            <person name="Frith M.C."/>
            <person name="Maeda N."/>
            <person name="Oyama R."/>
            <person name="Ravasi T."/>
            <person name="Lenhard B."/>
            <person name="Wells C."/>
            <person name="Kodzius R."/>
            <person name="Shimokawa K."/>
            <person name="Bajic V.B."/>
            <person name="Brenner S.E."/>
            <person name="Batalov S."/>
            <person name="Forrest A.R."/>
            <person name="Zavolan M."/>
            <person name="Davis M.J."/>
            <person name="Wilming L.G."/>
            <person name="Aidinis V."/>
            <person name="Allen J.E."/>
            <person name="Ambesi-Impiombato A."/>
            <person name="Apweiler R."/>
            <person name="Aturaliya R.N."/>
            <person name="Bailey T.L."/>
            <person name="Bansal M."/>
            <person name="Baxter L."/>
            <person name="Beisel K.W."/>
            <person name="Bersano T."/>
            <person name="Bono H."/>
            <person name="Chalk A.M."/>
            <person name="Chiu K.P."/>
            <person name="Choudhary V."/>
            <person name="Christoffels A."/>
            <person name="Clutterbuck D.R."/>
            <person name="Crowe M.L."/>
            <person name="Dalla E."/>
            <person name="Dalrymple B.P."/>
            <person name="de Bono B."/>
            <person name="Della Gatta G."/>
            <person name="di Bernardo D."/>
            <person name="Down T."/>
            <person name="Engstrom P."/>
            <person name="Fagiolini M."/>
            <person name="Faulkner G."/>
            <person name="Fletcher C.F."/>
            <person name="Fukushima T."/>
            <person name="Furuno M."/>
            <person name="Futaki S."/>
            <person name="Gariboldi M."/>
            <person name="Georgii-Hemming P."/>
            <person name="Gingeras T.R."/>
            <person name="Gojobori T."/>
            <person name="Green R.E."/>
            <person name="Gustincich S."/>
            <person name="Harbers M."/>
            <person name="Hayashi Y."/>
            <person name="Hensch T.K."/>
            <person name="Hirokawa N."/>
            <person name="Hill D."/>
            <person name="Huminiecki L."/>
            <person name="Iacono M."/>
            <person name="Ikeo K."/>
            <person name="Iwama A."/>
            <person name="Ishikawa T."/>
            <person name="Jakt M."/>
            <person name="Kanapin A."/>
            <person name="Katoh M."/>
            <person name="Kawasawa Y."/>
            <person name="Kelso J."/>
            <person name="Kitamura H."/>
            <person name="Kitano H."/>
            <person name="Kollias G."/>
            <person name="Krishnan S.P."/>
            <person name="Kruger A."/>
            <person name="Kummerfeld S.K."/>
            <person name="Kurochkin I.V."/>
            <person name="Lareau L.F."/>
            <person name="Lazarevic D."/>
            <person name="Lipovich L."/>
            <person name="Liu J."/>
            <person name="Liuni S."/>
            <person name="McWilliam S."/>
            <person name="Madan Babu M."/>
            <person name="Madera M."/>
            <person name="Marchionni L."/>
            <person name="Matsuda H."/>
            <person name="Matsuzawa S."/>
            <person name="Miki H."/>
            <person name="Mignone F."/>
            <person name="Miyake S."/>
            <person name="Morris K."/>
            <person name="Mottagui-Tabar S."/>
            <person name="Mulder N."/>
            <person name="Nakano N."/>
            <person name="Nakauchi H."/>
            <person name="Ng P."/>
            <person name="Nilsson R."/>
            <person name="Nishiguchi S."/>
            <person name="Nishikawa S."/>
            <person name="Nori F."/>
            <person name="Ohara O."/>
            <person name="Okazaki Y."/>
            <person name="Orlando V."/>
            <person name="Pang K.C."/>
            <person name="Pavan W.J."/>
            <person name="Pavesi G."/>
            <person name="Pesole G."/>
            <person name="Petrovsky N."/>
            <person name="Piazza S."/>
            <person name="Reed J."/>
            <person name="Reid J.F."/>
            <person name="Ring B.Z."/>
            <person name="Ringwald M."/>
            <person name="Rost B."/>
            <person name="Ruan Y."/>
            <person name="Salzberg S.L."/>
            <person name="Sandelin A."/>
            <person name="Schneider C."/>
            <person name="Schoenbach C."/>
            <person name="Sekiguchi K."/>
            <person name="Semple C.A."/>
            <person name="Seno S."/>
            <person name="Sessa L."/>
            <person name="Sheng Y."/>
            <person name="Shibata Y."/>
            <person name="Shimada H."/>
            <person name="Shimada K."/>
            <person name="Silva D."/>
            <person name="Sinclair B."/>
            <person name="Sperling S."/>
            <person name="Stupka E."/>
            <person name="Sugiura K."/>
            <person name="Sultana R."/>
            <person name="Takenaka Y."/>
            <person name="Taki K."/>
            <person name="Tammoja K."/>
            <person name="Tan S.L."/>
            <person name="Tang S."/>
            <person name="Taylor M.S."/>
            <person name="Tegner J."/>
            <person name="Teichmann S.A."/>
            <person name="Ueda H.R."/>
            <person name="van Nimwegen E."/>
            <person name="Verardo R."/>
            <person name="Wei C.L."/>
            <person name="Yagi K."/>
            <person name="Yamanishi H."/>
            <person name="Zabarovsky E."/>
            <person name="Zhu S."/>
            <person name="Zimmer A."/>
            <person name="Hide W."/>
            <person name="Bult C."/>
            <person name="Grimmond S.M."/>
            <person name="Teasdale R.D."/>
            <person name="Liu E.T."/>
            <person name="Brusic V."/>
            <person name="Quackenbush J."/>
            <person name="Wahlestedt C."/>
            <person name="Mattick J.S."/>
            <person name="Hume D.A."/>
            <person name="Kai C."/>
            <person name="Sasaki D."/>
            <person name="Tomaru Y."/>
            <person name="Fukuda S."/>
            <person name="Kanamori-Katayama M."/>
            <person name="Suzuki M."/>
            <person name="Aoki J."/>
            <person name="Arakawa T."/>
            <person name="Iida J."/>
            <person name="Imamura K."/>
            <person name="Itoh M."/>
            <person name="Kato T."/>
            <person name="Kawaji H."/>
            <person name="Kawagashira N."/>
            <person name="Kawashima T."/>
            <person name="Kojima M."/>
            <person name="Kondo S."/>
            <person name="Konno H."/>
            <person name="Nakano K."/>
            <person name="Ninomiya N."/>
            <person name="Nishio T."/>
            <person name="Okada M."/>
            <person name="Plessy C."/>
            <person name="Shibata K."/>
            <person name="Shiraki T."/>
            <person name="Suzuki S."/>
            <person name="Tagami M."/>
            <person name="Waki K."/>
            <person name="Watahiki A."/>
            <person name="Okamura-Oho Y."/>
            <person name="Suzuki H."/>
            <person name="Kawai J."/>
            <person name="Hayashizaki Y."/>
        </authorList>
    </citation>
    <scope>NUCLEOTIDE SEQUENCE [LARGE SCALE MRNA] (ISOFORMS 1; 2 AND 3)</scope>
    <source>
        <strain>C57BL/6J</strain>
        <tissue>Bone marrow</tissue>
        <tissue>Embryo</tissue>
        <tissue>Spinal ganglion</tissue>
        <tissue>Testis</tissue>
        <tissue>Tongue</tissue>
    </source>
</reference>
<reference key="3">
    <citation type="journal article" date="2004" name="Genome Res.">
        <title>The status, quality, and expansion of the NIH full-length cDNA project: the Mammalian Gene Collection (MGC).</title>
        <authorList>
            <consortium name="The MGC Project Team"/>
        </authorList>
    </citation>
    <scope>NUCLEOTIDE SEQUENCE [LARGE SCALE MRNA] (ISOFORM 1)</scope>
    <source>
        <strain>C57BL/6J</strain>
        <strain>FVB/N</strain>
        <strain>NMRI</strain>
        <tissue>Mammary gland</tissue>
    </source>
</reference>
<reference key="4">
    <citation type="journal article" date="2019" name="Cell Host Microbe">
        <title>Systematic Identification of Host Cell Regulators of Legionella pneumophila Pathogenesis Using a Genome-wide CRISPR Screen.</title>
        <authorList>
            <person name="Jeng E.E."/>
            <person name="Bhadkamkar V."/>
            <person name="Ibe N.U."/>
            <person name="Gause H."/>
            <person name="Jiang L."/>
            <person name="Chan J."/>
            <person name="Jian R."/>
            <person name="Jimenez-Morales D."/>
            <person name="Stevenson E."/>
            <person name="Krogan N.J."/>
            <person name="Swaney D.L."/>
            <person name="Snyder M.P."/>
            <person name="Mukherjee S."/>
            <person name="Bassik M.C."/>
        </authorList>
    </citation>
    <scope>FUNCTION</scope>
</reference>
<feature type="chain" id="PRO_0000089257" description="Protein C1orf43 homolog">
    <location>
        <begin position="1"/>
        <end position="253"/>
    </location>
</feature>
<feature type="transmembrane region" description="Helical" evidence="2">
    <location>
        <begin position="11"/>
        <end position="31"/>
    </location>
</feature>
<feature type="splice variant" id="VSP_014422" description="In isoform 3." evidence="4">
    <location>
        <begin position="190"/>
        <end position="253"/>
    </location>
</feature>
<feature type="splice variant" id="VSP_014423" description="In isoform 2." evidence="4">
    <original>VKARIGSSQR</original>
    <variation>FTYFMYMSTL</variation>
    <location>
        <begin position="190"/>
        <end position="199"/>
    </location>
</feature>
<feature type="splice variant" id="VSP_014424" description="In isoform 2." evidence="4">
    <location>
        <begin position="200"/>
        <end position="253"/>
    </location>
</feature>
<feature type="sequence conflict" description="In Ref. 2; BAB30964/BAC28820." evidence="5" ref="2">
    <original>S</original>
    <variation>N</variation>
    <location>
        <position position="4"/>
    </location>
</feature>
<feature type="sequence conflict" description="In Ref. 2; BAB26242." evidence="5" ref="2">
    <original>A</original>
    <variation>S</variation>
    <location>
        <position position="192"/>
    </location>
</feature>
<feature type="sequence conflict" description="In Ref. 2; BAC34568." evidence="5" ref="2">
    <original>S</original>
    <variation>A</variation>
    <location>
        <position position="203"/>
    </location>
</feature>
<feature type="sequence conflict" description="In Ref. 3; AAH22598." evidence="5" ref="3">
    <original>F</original>
    <variation>L</variation>
    <location>
        <position position="242"/>
    </location>
</feature>
<organism>
    <name type="scientific">Mus musculus</name>
    <name type="common">Mouse</name>
    <dbReference type="NCBI Taxonomy" id="10090"/>
    <lineage>
        <taxon>Eukaryota</taxon>
        <taxon>Metazoa</taxon>
        <taxon>Chordata</taxon>
        <taxon>Craniata</taxon>
        <taxon>Vertebrata</taxon>
        <taxon>Euteleostomi</taxon>
        <taxon>Mammalia</taxon>
        <taxon>Eutheria</taxon>
        <taxon>Euarchontoglires</taxon>
        <taxon>Glires</taxon>
        <taxon>Rodentia</taxon>
        <taxon>Myomorpha</taxon>
        <taxon>Muroidea</taxon>
        <taxon>Muridae</taxon>
        <taxon>Murinae</taxon>
        <taxon>Mus</taxon>
        <taxon>Mus</taxon>
    </lineage>
</organism>
<name>CA043_MOUSE</name>
<comment type="function">
    <text evidence="3">General regulator of phagocytosis. Required to uptake Gram negative bacterium by macrophages.</text>
</comment>
<comment type="subcellular location">
    <subcellularLocation>
        <location evidence="5">Membrane</location>
        <topology evidence="5">Single-pass membrane protein</topology>
    </subcellularLocation>
    <subcellularLocation>
        <location evidence="1">Golgi apparatus</location>
    </subcellularLocation>
    <subcellularLocation>
        <location evidence="1">Mitochondrion</location>
    </subcellularLocation>
</comment>
<comment type="alternative products">
    <event type="alternative splicing"/>
    <isoform>
        <id>Q8R092-3</id>
        <name>1</name>
        <sequence type="displayed"/>
    </isoform>
    <isoform>
        <id>Q8R092-1</id>
        <name>2</name>
        <sequence type="described" ref="VSP_014423 VSP_014424"/>
    </isoform>
    <isoform>
        <id>Q8R092-2</id>
        <name>3</name>
        <sequence type="described" ref="VSP_014422"/>
    </isoform>
</comment>
<comment type="domain">
    <text evidence="1">N-terminal region is required for phagocytosis of Gram negative bacterium.</text>
</comment>
<accession>Q8R092</accession>
<accession>Q3UBD8</accession>
<accession>Q8BII4</accession>
<accession>Q8BIP7</accession>
<accession>Q8R240</accession>
<accession>Q9CV59</accession>
<accession>Q9CYB6</accession>
<dbReference type="EMBL" id="AY533135">
    <property type="protein sequence ID" value="AAS21302.1"/>
    <property type="molecule type" value="mRNA"/>
</dbReference>
<dbReference type="EMBL" id="AK009362">
    <property type="protein sequence ID" value="BAB26242.1"/>
    <property type="molecule type" value="mRNA"/>
</dbReference>
<dbReference type="EMBL" id="AK017833">
    <property type="protein sequence ID" value="BAB30964.2"/>
    <property type="molecule type" value="mRNA"/>
</dbReference>
<dbReference type="EMBL" id="AK034749">
    <property type="protein sequence ID" value="BAC28820.1"/>
    <property type="molecule type" value="mRNA"/>
</dbReference>
<dbReference type="EMBL" id="AK051238">
    <property type="protein sequence ID" value="BAC34568.1"/>
    <property type="molecule type" value="mRNA"/>
</dbReference>
<dbReference type="EMBL" id="AK077215">
    <property type="protein sequence ID" value="BAC36688.1"/>
    <property type="molecule type" value="mRNA"/>
</dbReference>
<dbReference type="EMBL" id="AK151002">
    <property type="protein sequence ID" value="BAE30026.1"/>
    <property type="molecule type" value="mRNA"/>
</dbReference>
<dbReference type="EMBL" id="BC022598">
    <property type="protein sequence ID" value="AAH22598.1"/>
    <property type="molecule type" value="mRNA"/>
</dbReference>
<dbReference type="EMBL" id="BC027190">
    <property type="protein sequence ID" value="AAH27190.1"/>
    <property type="molecule type" value="mRNA"/>
</dbReference>
<dbReference type="CCDS" id="CCDS17520.1">
    <molecule id="Q8R092-3"/>
</dbReference>
<dbReference type="CCDS" id="CCDS50967.1">
    <molecule id="Q8R092-2"/>
</dbReference>
<dbReference type="RefSeq" id="NP_001274016.1">
    <molecule id="Q8R092-3"/>
    <property type="nucleotide sequence ID" value="NM_001287087.2"/>
</dbReference>
<dbReference type="RefSeq" id="NP_080038.1">
    <molecule id="Q8R092-3"/>
    <property type="nucleotide sequence ID" value="NM_025762.4"/>
</dbReference>
<dbReference type="RefSeq" id="NP_081776.2">
    <molecule id="Q8R092-2"/>
    <property type="nucleotide sequence ID" value="NM_027500.5"/>
</dbReference>
<dbReference type="BioGRID" id="221293">
    <property type="interactions" value="1"/>
</dbReference>
<dbReference type="FunCoup" id="Q8R092">
    <property type="interactions" value="3235"/>
</dbReference>
<dbReference type="STRING" id="10090.ENSMUSP00000124028"/>
<dbReference type="iPTMnet" id="Q8R092"/>
<dbReference type="PhosphoSitePlus" id="Q8R092"/>
<dbReference type="PaxDb" id="10090-ENSMUSP00000124028"/>
<dbReference type="Pumba" id="Q8R092"/>
<dbReference type="DNASU" id="99650"/>
<dbReference type="Ensembl" id="ENSMUST00000029552.13">
    <molecule id="Q8R092-2"/>
    <property type="protein sequence ID" value="ENSMUSP00000029552.7"/>
    <property type="gene ID" value="ENSMUSG00000027942.18"/>
</dbReference>
<dbReference type="Ensembl" id="ENSMUST00000159064.8">
    <molecule id="Q8R092-3"/>
    <property type="protein sequence ID" value="ENSMUSP00000124554.2"/>
    <property type="gene ID" value="ENSMUSG00000027942.18"/>
</dbReference>
<dbReference type="Ensembl" id="ENSMUST00000160640.8">
    <molecule id="Q8R092-3"/>
    <property type="protein sequence ID" value="ENSMUSP00000124028.2"/>
    <property type="gene ID" value="ENSMUSG00000027942.18"/>
</dbReference>
<dbReference type="Ensembl" id="ENSMUST00000162114.8">
    <molecule id="Q8R092-1"/>
    <property type="protein sequence ID" value="ENSMUSP00000124822.2"/>
    <property type="gene ID" value="ENSMUSG00000027942.18"/>
</dbReference>
<dbReference type="Ensembl" id="ENSMUST00000239076.2">
    <molecule id="Q8R092-3"/>
    <property type="protein sequence ID" value="ENSMUSP00000159150.2"/>
    <property type="gene ID" value="ENSMUSG00000118504.2"/>
</dbReference>
<dbReference type="GeneID" id="99650"/>
<dbReference type="KEGG" id="mmu:99650"/>
<dbReference type="UCSC" id="uc008qba.3">
    <molecule id="Q8R092-3"/>
    <property type="organism name" value="mouse"/>
</dbReference>
<dbReference type="UCSC" id="uc008qbb.3">
    <molecule id="Q8R092-1"/>
    <property type="organism name" value="mouse"/>
</dbReference>
<dbReference type="AGR" id="MGI:1914027"/>
<dbReference type="MGI" id="MGI:1914027">
    <property type="gene designation" value="4933434E20Rik"/>
</dbReference>
<dbReference type="VEuPathDB" id="HostDB:ENSMUSG00000027942"/>
<dbReference type="VEuPathDB" id="HostDB:ENSMUSG00000118504"/>
<dbReference type="eggNOG" id="ENOG502QUKH">
    <property type="taxonomic scope" value="Eukaryota"/>
</dbReference>
<dbReference type="GeneTree" id="ENSGT00510000047366"/>
<dbReference type="HOGENOM" id="CLU_068266_0_0_1"/>
<dbReference type="InParanoid" id="Q8R092"/>
<dbReference type="OMA" id="QHAKVNM"/>
<dbReference type="OrthoDB" id="5960253at2759"/>
<dbReference type="PhylomeDB" id="Q8R092"/>
<dbReference type="TreeFam" id="TF324880"/>
<dbReference type="BioGRID-ORCS" id="99650">
    <property type="hits" value="4 hits in 79 CRISPR screens"/>
</dbReference>
<dbReference type="PRO" id="PR:Q8R092"/>
<dbReference type="Proteomes" id="UP000000589">
    <property type="component" value="Chromosome 3"/>
</dbReference>
<dbReference type="RNAct" id="Q8R092">
    <property type="molecule type" value="protein"/>
</dbReference>
<dbReference type="Bgee" id="ENSMUSG00000027942">
    <property type="expression patterns" value="Expressed in quadriceps femoris and 63 other cell types or tissues"/>
</dbReference>
<dbReference type="ExpressionAtlas" id="Q8R092">
    <property type="expression patterns" value="baseline and differential"/>
</dbReference>
<dbReference type="GO" id="GO:0005829">
    <property type="term" value="C:cytosol"/>
    <property type="evidence" value="ECO:0007669"/>
    <property type="project" value="Ensembl"/>
</dbReference>
<dbReference type="GO" id="GO:0005794">
    <property type="term" value="C:Golgi apparatus"/>
    <property type="evidence" value="ECO:0000250"/>
    <property type="project" value="UniProtKB"/>
</dbReference>
<dbReference type="GO" id="GO:0016020">
    <property type="term" value="C:membrane"/>
    <property type="evidence" value="ECO:0007669"/>
    <property type="project" value="UniProtKB-SubCell"/>
</dbReference>
<dbReference type="GO" id="GO:0005739">
    <property type="term" value="C:mitochondrion"/>
    <property type="evidence" value="ECO:0000250"/>
    <property type="project" value="UniProtKB"/>
</dbReference>
<dbReference type="GO" id="GO:0001701">
    <property type="term" value="P:in utero embryonic development"/>
    <property type="evidence" value="ECO:0000315"/>
    <property type="project" value="MGI"/>
</dbReference>
<dbReference type="GO" id="GO:0006909">
    <property type="term" value="P:phagocytosis"/>
    <property type="evidence" value="ECO:0000315"/>
    <property type="project" value="UniProtKB"/>
</dbReference>
<dbReference type="InterPro" id="IPR010876">
    <property type="entry name" value="C1orf43"/>
</dbReference>
<dbReference type="PANTHER" id="PTHR21425">
    <property type="entry name" value="NICE-3"/>
    <property type="match status" value="1"/>
</dbReference>
<dbReference type="PANTHER" id="PTHR21425:SF2">
    <property type="entry name" value="PROTEIN C1ORF43"/>
    <property type="match status" value="1"/>
</dbReference>
<dbReference type="Pfam" id="PF07406">
    <property type="entry name" value="NICE-3"/>
    <property type="match status" value="1"/>
</dbReference>
<keyword id="KW-0025">Alternative splicing</keyword>
<keyword id="KW-0333">Golgi apparatus</keyword>
<keyword id="KW-0472">Membrane</keyword>
<keyword id="KW-0496">Mitochondrion</keyword>
<keyword id="KW-1185">Reference proteome</keyword>
<keyword id="KW-0812">Transmembrane</keyword>
<keyword id="KW-1133">Transmembrane helix</keyword>